<accession>C1CYD9</accession>
<feature type="chain" id="PRO_1000204648" description="Porphobilinogen deaminase">
    <location>
        <begin position="1"/>
        <end position="311"/>
    </location>
</feature>
<feature type="modified residue" description="S-(dipyrrolylmethanemethyl)cysteine" evidence="1">
    <location>
        <position position="245"/>
    </location>
</feature>
<protein>
    <recommendedName>
        <fullName evidence="1">Porphobilinogen deaminase</fullName>
        <shortName evidence="1">PBG</shortName>
        <ecNumber evidence="1">2.5.1.61</ecNumber>
    </recommendedName>
    <alternativeName>
        <fullName evidence="1">Hydroxymethylbilane synthase</fullName>
        <shortName evidence="1">HMBS</shortName>
    </alternativeName>
    <alternativeName>
        <fullName evidence="1">Pre-uroporphyrinogen synthase</fullName>
    </alternativeName>
</protein>
<proteinExistence type="inferred from homology"/>
<gene>
    <name evidence="1" type="primary">hemC</name>
    <name type="ordered locus">Deide_01510</name>
</gene>
<dbReference type="EC" id="2.5.1.61" evidence="1"/>
<dbReference type="EMBL" id="CP001114">
    <property type="protein sequence ID" value="ACO44960.1"/>
    <property type="molecule type" value="Genomic_DNA"/>
</dbReference>
<dbReference type="RefSeq" id="WP_012692083.1">
    <property type="nucleotide sequence ID" value="NC_012526.1"/>
</dbReference>
<dbReference type="SMR" id="C1CYD9"/>
<dbReference type="STRING" id="546414.Deide_01510"/>
<dbReference type="PaxDb" id="546414-Deide_01510"/>
<dbReference type="KEGG" id="ddr:Deide_01510"/>
<dbReference type="eggNOG" id="COG0181">
    <property type="taxonomic scope" value="Bacteria"/>
</dbReference>
<dbReference type="HOGENOM" id="CLU_019704_1_0_0"/>
<dbReference type="OrthoDB" id="9810298at2"/>
<dbReference type="UniPathway" id="UPA00251">
    <property type="reaction ID" value="UER00319"/>
</dbReference>
<dbReference type="Proteomes" id="UP000002208">
    <property type="component" value="Chromosome"/>
</dbReference>
<dbReference type="GO" id="GO:0005737">
    <property type="term" value="C:cytoplasm"/>
    <property type="evidence" value="ECO:0007669"/>
    <property type="project" value="TreeGrafter"/>
</dbReference>
<dbReference type="GO" id="GO:0004418">
    <property type="term" value="F:hydroxymethylbilane synthase activity"/>
    <property type="evidence" value="ECO:0007669"/>
    <property type="project" value="UniProtKB-UniRule"/>
</dbReference>
<dbReference type="GO" id="GO:0006782">
    <property type="term" value="P:protoporphyrinogen IX biosynthetic process"/>
    <property type="evidence" value="ECO:0007669"/>
    <property type="project" value="UniProtKB-UniRule"/>
</dbReference>
<dbReference type="CDD" id="cd13646">
    <property type="entry name" value="PBP2_EcHMBS_like"/>
    <property type="match status" value="1"/>
</dbReference>
<dbReference type="FunFam" id="3.40.190.10:FF:000005">
    <property type="entry name" value="Porphobilinogen deaminase"/>
    <property type="match status" value="1"/>
</dbReference>
<dbReference type="FunFam" id="3.40.190.10:FF:000086">
    <property type="entry name" value="Probable porphobilinogen deaminase"/>
    <property type="match status" value="1"/>
</dbReference>
<dbReference type="Gene3D" id="3.40.190.10">
    <property type="entry name" value="Periplasmic binding protein-like II"/>
    <property type="match status" value="2"/>
</dbReference>
<dbReference type="Gene3D" id="3.30.160.40">
    <property type="entry name" value="Porphobilinogen deaminase, C-terminal domain"/>
    <property type="match status" value="1"/>
</dbReference>
<dbReference type="HAMAP" id="MF_00260">
    <property type="entry name" value="Porphobil_deam"/>
    <property type="match status" value="1"/>
</dbReference>
<dbReference type="InterPro" id="IPR000860">
    <property type="entry name" value="HemC"/>
</dbReference>
<dbReference type="InterPro" id="IPR022419">
    <property type="entry name" value="Porphobilin_deaminase_cofac_BS"/>
</dbReference>
<dbReference type="InterPro" id="IPR022417">
    <property type="entry name" value="Porphobilin_deaminase_N"/>
</dbReference>
<dbReference type="InterPro" id="IPR022418">
    <property type="entry name" value="Porphobilinogen_deaminase_C"/>
</dbReference>
<dbReference type="InterPro" id="IPR036803">
    <property type="entry name" value="Porphobilinogen_deaminase_C_sf"/>
</dbReference>
<dbReference type="NCBIfam" id="TIGR00212">
    <property type="entry name" value="hemC"/>
    <property type="match status" value="1"/>
</dbReference>
<dbReference type="PANTHER" id="PTHR11557">
    <property type="entry name" value="PORPHOBILINOGEN DEAMINASE"/>
    <property type="match status" value="1"/>
</dbReference>
<dbReference type="PANTHER" id="PTHR11557:SF0">
    <property type="entry name" value="PORPHOBILINOGEN DEAMINASE"/>
    <property type="match status" value="1"/>
</dbReference>
<dbReference type="Pfam" id="PF01379">
    <property type="entry name" value="Porphobil_deam"/>
    <property type="match status" value="1"/>
</dbReference>
<dbReference type="Pfam" id="PF03900">
    <property type="entry name" value="Porphobil_deamC"/>
    <property type="match status" value="1"/>
</dbReference>
<dbReference type="PIRSF" id="PIRSF001438">
    <property type="entry name" value="4pyrrol_synth_OHMeBilane_synth"/>
    <property type="match status" value="1"/>
</dbReference>
<dbReference type="PRINTS" id="PR00151">
    <property type="entry name" value="PORPHBDMNASE"/>
</dbReference>
<dbReference type="SUPFAM" id="SSF53850">
    <property type="entry name" value="Periplasmic binding protein-like II"/>
    <property type="match status" value="1"/>
</dbReference>
<dbReference type="SUPFAM" id="SSF54782">
    <property type="entry name" value="Porphobilinogen deaminase (hydroxymethylbilane synthase), C-terminal domain"/>
    <property type="match status" value="1"/>
</dbReference>
<dbReference type="PROSITE" id="PS00533">
    <property type="entry name" value="PORPHOBILINOGEN_DEAM"/>
    <property type="match status" value="1"/>
</dbReference>
<comment type="function">
    <text evidence="1">Tetrapolymerization of the monopyrrole PBG into the hydroxymethylbilane pre-uroporphyrinogen in several discrete steps.</text>
</comment>
<comment type="catalytic activity">
    <reaction evidence="1">
        <text>4 porphobilinogen + H2O = hydroxymethylbilane + 4 NH4(+)</text>
        <dbReference type="Rhea" id="RHEA:13185"/>
        <dbReference type="ChEBI" id="CHEBI:15377"/>
        <dbReference type="ChEBI" id="CHEBI:28938"/>
        <dbReference type="ChEBI" id="CHEBI:57845"/>
        <dbReference type="ChEBI" id="CHEBI:58126"/>
        <dbReference type="EC" id="2.5.1.61"/>
    </reaction>
</comment>
<comment type="cofactor">
    <cofactor evidence="1">
        <name>dipyrromethane</name>
        <dbReference type="ChEBI" id="CHEBI:60342"/>
    </cofactor>
    <text evidence="1">Binds 1 dipyrromethane group covalently.</text>
</comment>
<comment type="pathway">
    <text evidence="1">Porphyrin-containing compound metabolism; protoporphyrin-IX biosynthesis; coproporphyrinogen-III from 5-aminolevulinate: step 2/4.</text>
</comment>
<comment type="subunit">
    <text evidence="1">Monomer.</text>
</comment>
<comment type="miscellaneous">
    <text evidence="1">The porphobilinogen subunits are added to the dipyrromethane group.</text>
</comment>
<comment type="similarity">
    <text evidence="1">Belongs to the HMBS family.</text>
</comment>
<evidence type="ECO:0000255" key="1">
    <source>
        <dbReference type="HAMAP-Rule" id="MF_00260"/>
    </source>
</evidence>
<sequence>MRTVTVGTRGSTLALAQTRWVVARLKEEWPDTDFRIQTISTKGDRNRESLEAMAQKGDKGFWVKEIEDALLQKRIDIAVHSLKDLPTEQPEGLEVASIPKRVDARDVLIGKEGMKRLADLPQGARVGTSSVRRKAFLRAYRPDLQVIDLRGNIDTRLAALAGDEYDAIILAAAGLIRTEMRHRIDEFVEPDILLPAPGQGALALETRSGPENDLTIEVAYAIHDHGTDDRITAEREFLAGLGAGCMAPVGAHASIKGGVLTLEGWVGALDGSKVIRATSIGDPAECADIGAELAGDMLGQGAQALIDAARE</sequence>
<keyword id="KW-0627">Porphyrin biosynthesis</keyword>
<keyword id="KW-1185">Reference proteome</keyword>
<keyword id="KW-0808">Transferase</keyword>
<organism>
    <name type="scientific">Deinococcus deserti (strain DSM 17065 / CIP 109153 / LMG 22923 / VCD115)</name>
    <dbReference type="NCBI Taxonomy" id="546414"/>
    <lineage>
        <taxon>Bacteria</taxon>
        <taxon>Thermotogati</taxon>
        <taxon>Deinococcota</taxon>
        <taxon>Deinococci</taxon>
        <taxon>Deinococcales</taxon>
        <taxon>Deinococcaceae</taxon>
        <taxon>Deinococcus</taxon>
    </lineage>
</organism>
<name>HEM3_DEIDV</name>
<reference key="1">
    <citation type="journal article" date="2009" name="PLoS Genet.">
        <title>Alliance of proteomics and genomics to unravel the specificities of Sahara bacterium Deinococcus deserti.</title>
        <authorList>
            <person name="de Groot A."/>
            <person name="Dulermo R."/>
            <person name="Ortet P."/>
            <person name="Blanchard L."/>
            <person name="Guerin P."/>
            <person name="Fernandez B."/>
            <person name="Vacherie B."/>
            <person name="Dossat C."/>
            <person name="Jolivet E."/>
            <person name="Siguier P."/>
            <person name="Chandler M."/>
            <person name="Barakat M."/>
            <person name="Dedieu A."/>
            <person name="Barbe V."/>
            <person name="Heulin T."/>
            <person name="Sommer S."/>
            <person name="Achouak W."/>
            <person name="Armengaud J."/>
        </authorList>
    </citation>
    <scope>NUCLEOTIDE SEQUENCE [LARGE SCALE GENOMIC DNA]</scope>
    <source>
        <strain>DSM 17065 / CIP 109153 / LMG 22923 / VCD115</strain>
    </source>
</reference>